<dbReference type="EMBL" id="CR380948">
    <property type="protein sequence ID" value="CAG57892.1"/>
    <property type="molecule type" value="Genomic_DNA"/>
</dbReference>
<dbReference type="RefSeq" id="XP_444992.1">
    <property type="nucleotide sequence ID" value="XM_444992.1"/>
</dbReference>
<dbReference type="SMR" id="Q6FX62"/>
<dbReference type="FunCoup" id="Q6FX62">
    <property type="interactions" value="52"/>
</dbReference>
<dbReference type="STRING" id="284593.Q6FX62"/>
<dbReference type="GlyCosmos" id="Q6FX62">
    <property type="glycosylation" value="4 sites, No reported glycans"/>
</dbReference>
<dbReference type="EnsemblFungi" id="CAGL0B00506g-T">
    <property type="protein sequence ID" value="CAGL0B00506g-T-p1"/>
    <property type="gene ID" value="CAGL0B00506g"/>
</dbReference>
<dbReference type="KEGG" id="cgr:2886555"/>
<dbReference type="CGD" id="CAL0127126">
    <property type="gene designation" value="CAGL0B00506g"/>
</dbReference>
<dbReference type="VEuPathDB" id="FungiDB:CAGL0B00506g"/>
<dbReference type="eggNOG" id="ENOG502QS8N">
    <property type="taxonomic scope" value="Eukaryota"/>
</dbReference>
<dbReference type="HOGENOM" id="CLU_055666_0_0_1"/>
<dbReference type="InParanoid" id="Q6FX62"/>
<dbReference type="OMA" id="DKAWGSE"/>
<dbReference type="UniPathway" id="UPA00196"/>
<dbReference type="Proteomes" id="UP000002428">
    <property type="component" value="Chromosome B"/>
</dbReference>
<dbReference type="GO" id="GO:0005789">
    <property type="term" value="C:endoplasmic reticulum membrane"/>
    <property type="evidence" value="ECO:0007669"/>
    <property type="project" value="UniProtKB-SubCell"/>
</dbReference>
<dbReference type="GO" id="GO:1990529">
    <property type="term" value="C:glycosylphosphatidylinositol-mannosyltransferase I complex"/>
    <property type="evidence" value="ECO:0007669"/>
    <property type="project" value="EnsemblFungi"/>
</dbReference>
<dbReference type="GO" id="GO:0000030">
    <property type="term" value="F:mannosyltransferase activity"/>
    <property type="evidence" value="ECO:0007669"/>
    <property type="project" value="EnsemblFungi"/>
</dbReference>
<dbReference type="GO" id="GO:0036503">
    <property type="term" value="P:ERAD pathway"/>
    <property type="evidence" value="ECO:0007669"/>
    <property type="project" value="EnsemblFungi"/>
</dbReference>
<dbReference type="GO" id="GO:0006506">
    <property type="term" value="P:GPI anchor biosynthetic process"/>
    <property type="evidence" value="ECO:0007669"/>
    <property type="project" value="UniProtKB-UniPathway"/>
</dbReference>
<dbReference type="GO" id="GO:0016485">
    <property type="term" value="P:protein processing"/>
    <property type="evidence" value="ECO:0007669"/>
    <property type="project" value="EnsemblFungi"/>
</dbReference>
<dbReference type="InterPro" id="IPR042322">
    <property type="entry name" value="Pbn1"/>
</dbReference>
<dbReference type="InterPro" id="IPR013233">
    <property type="entry name" value="PIG-X/PBN1"/>
</dbReference>
<dbReference type="PANTHER" id="PTHR28533">
    <property type="entry name" value="PROTEIN PBN1"/>
    <property type="match status" value="1"/>
</dbReference>
<dbReference type="PANTHER" id="PTHR28533:SF1">
    <property type="entry name" value="PROTEIN PBN1"/>
    <property type="match status" value="1"/>
</dbReference>
<dbReference type="Pfam" id="PF08320">
    <property type="entry name" value="PIG-X"/>
    <property type="match status" value="1"/>
</dbReference>
<dbReference type="SMART" id="SM00780">
    <property type="entry name" value="PIG-X"/>
    <property type="match status" value="1"/>
</dbReference>
<name>PBN1_CANGA</name>
<gene>
    <name type="primary">PBN1</name>
    <name type="ordered locus">CAGL0B00506g</name>
</gene>
<sequence>MESVRHRIALLFANEADIQDVETVEDGVIVFPNSNITIQDRWTYAIDYELDSIRRISWRNPSSTRQFSVIESRLAPGFNIYSNDKEARLNLFGIQPVYSPMYKSLHSETWKSINEILPGGKNLNIPWNPELCDYDILITANTVQVFSYCSLVEKKKFVKDAGKVEIGLFHVDTEDEEDINLSGLRCTWEDTSNNIGKCEKTTLFYKPFHLYVDDSSDIAPITIENTNGLHPKMKIDLSGIRKDKDCRHFVFSQLPSEIFVDKFQSPGSIVFGLDDLELPDYKVNSLSWGSESIVTLKEGQINEITYFSRYLEPKERASNKTVGFEPILFKACQVGKEEDLSNPFYSRSLGYEAYFSENTKFYHINSTSVHVNIPYPNKNDIGNIEYTTFGIVVLAICYLIYKLLRPSRKLSTVKRD</sequence>
<accession>Q6FX62</accession>
<reference key="1">
    <citation type="journal article" date="2004" name="Nature">
        <title>Genome evolution in yeasts.</title>
        <authorList>
            <person name="Dujon B."/>
            <person name="Sherman D."/>
            <person name="Fischer G."/>
            <person name="Durrens P."/>
            <person name="Casaregola S."/>
            <person name="Lafontaine I."/>
            <person name="de Montigny J."/>
            <person name="Marck C."/>
            <person name="Neuveglise C."/>
            <person name="Talla E."/>
            <person name="Goffard N."/>
            <person name="Frangeul L."/>
            <person name="Aigle M."/>
            <person name="Anthouard V."/>
            <person name="Babour A."/>
            <person name="Barbe V."/>
            <person name="Barnay S."/>
            <person name="Blanchin S."/>
            <person name="Beckerich J.-M."/>
            <person name="Beyne E."/>
            <person name="Bleykasten C."/>
            <person name="Boisrame A."/>
            <person name="Boyer J."/>
            <person name="Cattolico L."/>
            <person name="Confanioleri F."/>
            <person name="de Daruvar A."/>
            <person name="Despons L."/>
            <person name="Fabre E."/>
            <person name="Fairhead C."/>
            <person name="Ferry-Dumazet H."/>
            <person name="Groppi A."/>
            <person name="Hantraye F."/>
            <person name="Hennequin C."/>
            <person name="Jauniaux N."/>
            <person name="Joyet P."/>
            <person name="Kachouri R."/>
            <person name="Kerrest A."/>
            <person name="Koszul R."/>
            <person name="Lemaire M."/>
            <person name="Lesur I."/>
            <person name="Ma L."/>
            <person name="Muller H."/>
            <person name="Nicaud J.-M."/>
            <person name="Nikolski M."/>
            <person name="Oztas S."/>
            <person name="Ozier-Kalogeropoulos O."/>
            <person name="Pellenz S."/>
            <person name="Potier S."/>
            <person name="Richard G.-F."/>
            <person name="Straub M.-L."/>
            <person name="Suleau A."/>
            <person name="Swennen D."/>
            <person name="Tekaia F."/>
            <person name="Wesolowski-Louvel M."/>
            <person name="Westhof E."/>
            <person name="Wirth B."/>
            <person name="Zeniou-Meyer M."/>
            <person name="Zivanovic Y."/>
            <person name="Bolotin-Fukuhara M."/>
            <person name="Thierry A."/>
            <person name="Bouchier C."/>
            <person name="Caudron B."/>
            <person name="Scarpelli C."/>
            <person name="Gaillardin C."/>
            <person name="Weissenbach J."/>
            <person name="Wincker P."/>
            <person name="Souciet J.-L."/>
        </authorList>
    </citation>
    <scope>NUCLEOTIDE SEQUENCE [LARGE SCALE GENOMIC DNA]</scope>
    <source>
        <strain>ATCC 2001 / BCRC 20586 / JCM 3761 / NBRC 0622 / NRRL Y-65 / CBS 138</strain>
    </source>
</reference>
<comment type="function">
    <text evidence="1">Required for proper folding and/or the stability of a subset of proteins in the endoplasmic reticulum. Component of glycosylphosphatidylinositol-mannosyltransferase 1 which transfers the first of the 4 mannoses in the GPI-anchor precursors during GPI-anchor biosynthesis. Probably acts by stabilizing the mannosyltransferase GPI14 (By similarity).</text>
</comment>
<comment type="pathway">
    <text>Glycolipid biosynthesis; glycosylphosphatidylinositol-anchor biosynthesis.</text>
</comment>
<comment type="subcellular location">
    <subcellularLocation>
        <location evidence="1">Endoplasmic reticulum membrane</location>
        <topology evidence="1">Single-pass type III membrane protein</topology>
    </subcellularLocation>
</comment>
<comment type="similarity">
    <text evidence="3">Belongs to the PIGX family.</text>
</comment>
<feature type="chain" id="PRO_0000246302" description="Protein PBN1">
    <location>
        <begin position="1"/>
        <end position="416"/>
    </location>
</feature>
<feature type="topological domain" description="Lumenal" evidence="2">
    <location>
        <begin position="1"/>
        <end position="381"/>
    </location>
</feature>
<feature type="transmembrane region" description="Helical" evidence="2">
    <location>
        <begin position="382"/>
        <end position="404"/>
    </location>
</feature>
<feature type="topological domain" description="Cytoplasmic" evidence="2">
    <location>
        <begin position="405"/>
        <end position="416"/>
    </location>
</feature>
<feature type="glycosylation site" description="N-linked (GlcNAc...) asparagine" evidence="2">
    <location>
        <position position="35"/>
    </location>
</feature>
<feature type="glycosylation site" description="N-linked (GlcNAc...) asparagine" evidence="2">
    <location>
        <position position="180"/>
    </location>
</feature>
<feature type="glycosylation site" description="N-linked (GlcNAc...) asparagine" evidence="2">
    <location>
        <position position="319"/>
    </location>
</feature>
<feature type="glycosylation site" description="N-linked (GlcNAc...) asparagine" evidence="2">
    <location>
        <position position="365"/>
    </location>
</feature>
<protein>
    <recommendedName>
        <fullName>Protein PBN1</fullName>
    </recommendedName>
</protein>
<keyword id="KW-0256">Endoplasmic reticulum</keyword>
<keyword id="KW-0325">Glycoprotein</keyword>
<keyword id="KW-0337">GPI-anchor biosynthesis</keyword>
<keyword id="KW-0472">Membrane</keyword>
<keyword id="KW-1185">Reference proteome</keyword>
<keyword id="KW-0812">Transmembrane</keyword>
<keyword id="KW-1133">Transmembrane helix</keyword>
<proteinExistence type="inferred from homology"/>
<organism>
    <name type="scientific">Candida glabrata (strain ATCC 2001 / BCRC 20586 / JCM 3761 / NBRC 0622 / NRRL Y-65 / CBS 138)</name>
    <name type="common">Yeast</name>
    <name type="synonym">Nakaseomyces glabratus</name>
    <dbReference type="NCBI Taxonomy" id="284593"/>
    <lineage>
        <taxon>Eukaryota</taxon>
        <taxon>Fungi</taxon>
        <taxon>Dikarya</taxon>
        <taxon>Ascomycota</taxon>
        <taxon>Saccharomycotina</taxon>
        <taxon>Saccharomycetes</taxon>
        <taxon>Saccharomycetales</taxon>
        <taxon>Saccharomycetaceae</taxon>
        <taxon>Nakaseomyces</taxon>
    </lineage>
</organism>
<evidence type="ECO:0000250" key="1"/>
<evidence type="ECO:0000255" key="2"/>
<evidence type="ECO:0000305" key="3"/>